<proteinExistence type="inferred from homology"/>
<organism>
    <name type="scientific">Danio rerio</name>
    <name type="common">Zebrafish</name>
    <name type="synonym">Brachydanio rerio</name>
    <dbReference type="NCBI Taxonomy" id="7955"/>
    <lineage>
        <taxon>Eukaryota</taxon>
        <taxon>Metazoa</taxon>
        <taxon>Chordata</taxon>
        <taxon>Craniata</taxon>
        <taxon>Vertebrata</taxon>
        <taxon>Euteleostomi</taxon>
        <taxon>Actinopterygii</taxon>
        <taxon>Neopterygii</taxon>
        <taxon>Teleostei</taxon>
        <taxon>Ostariophysi</taxon>
        <taxon>Cypriniformes</taxon>
        <taxon>Danionidae</taxon>
        <taxon>Danioninae</taxon>
        <taxon>Danio</taxon>
    </lineage>
</organism>
<dbReference type="EC" id="2.3.1.225" evidence="1"/>
<dbReference type="EC" id="2.3.1.-" evidence="4"/>
<dbReference type="EMBL" id="CR762398">
    <property type="status" value="NOT_ANNOTATED_CDS"/>
    <property type="molecule type" value="Genomic_DNA"/>
</dbReference>
<dbReference type="SMR" id="A0A0R4IDP3"/>
<dbReference type="FunCoup" id="A0A0R4IDP3">
    <property type="interactions" value="644"/>
</dbReference>
<dbReference type="STRING" id="7955.ENSDARP00000131560"/>
<dbReference type="Ensembl" id="ENSDART00000159562">
    <property type="protein sequence ID" value="ENSDARP00000131560"/>
    <property type="gene ID" value="ENSDARG00000101039"/>
</dbReference>
<dbReference type="InParanoid" id="A0A0R4IDP3"/>
<dbReference type="OMA" id="FYVMQRM"/>
<dbReference type="Proteomes" id="UP000000437">
    <property type="component" value="Unplaced"/>
</dbReference>
<dbReference type="Bgee" id="ENSDARG00000101039">
    <property type="expression patterns" value="Expressed in mature ovarian follicle and 14 other cell types or tissues"/>
</dbReference>
<dbReference type="GO" id="GO:0000139">
    <property type="term" value="C:Golgi membrane"/>
    <property type="evidence" value="ECO:0000250"/>
    <property type="project" value="UniProtKB"/>
</dbReference>
<dbReference type="GO" id="GO:0014069">
    <property type="term" value="C:postsynaptic density"/>
    <property type="evidence" value="ECO:0007669"/>
    <property type="project" value="UniProtKB-SubCell"/>
</dbReference>
<dbReference type="GO" id="GO:0019705">
    <property type="term" value="F:protein-cysteine S-myristoyltransferase activity"/>
    <property type="evidence" value="ECO:0007669"/>
    <property type="project" value="RHEA"/>
</dbReference>
<dbReference type="GO" id="GO:0019706">
    <property type="term" value="F:protein-cysteine S-palmitoyltransferase activity"/>
    <property type="evidence" value="ECO:0000250"/>
    <property type="project" value="UniProtKB"/>
</dbReference>
<dbReference type="GO" id="GO:0140439">
    <property type="term" value="F:protein-cysteine S-stearoyltransferase activity"/>
    <property type="evidence" value="ECO:0007669"/>
    <property type="project" value="RHEA"/>
</dbReference>
<dbReference type="GO" id="GO:0008270">
    <property type="term" value="F:zinc ion binding"/>
    <property type="evidence" value="ECO:0000250"/>
    <property type="project" value="UniProtKB"/>
</dbReference>
<dbReference type="GO" id="GO:0018230">
    <property type="term" value="P:peptidyl-L-cysteine S-palmitoylation"/>
    <property type="evidence" value="ECO:0000250"/>
    <property type="project" value="UniProtKB"/>
</dbReference>
<dbReference type="GO" id="GO:0072657">
    <property type="term" value="P:protein localization to membrane"/>
    <property type="evidence" value="ECO:0000250"/>
    <property type="project" value="UniProtKB"/>
</dbReference>
<dbReference type="GO" id="GO:0140450">
    <property type="term" value="P:protein targeting to Golgi apparatus"/>
    <property type="evidence" value="ECO:0000250"/>
    <property type="project" value="UniProtKB"/>
</dbReference>
<dbReference type="InterPro" id="IPR001594">
    <property type="entry name" value="Palmitoyltrfase_DHHC"/>
</dbReference>
<dbReference type="InterPro" id="IPR039859">
    <property type="entry name" value="PFA4/ZDH16/20/ERF2-like"/>
</dbReference>
<dbReference type="PANTHER" id="PTHR12246">
    <property type="entry name" value="PALMITOYLTRANSFERASE ZDHHC16"/>
    <property type="match status" value="1"/>
</dbReference>
<dbReference type="Pfam" id="PF01529">
    <property type="entry name" value="DHHC"/>
    <property type="match status" value="1"/>
</dbReference>
<dbReference type="PROSITE" id="PS50216">
    <property type="entry name" value="DHHC"/>
    <property type="match status" value="1"/>
</dbReference>
<protein>
    <recommendedName>
        <fullName evidence="9">Palmitoyltransferase ZDHHC15A</fullName>
        <ecNumber evidence="1">2.3.1.225</ecNumber>
    </recommendedName>
    <alternativeName>
        <fullName evidence="4">Acyltransferase ZDHHC15A</fullName>
        <ecNumber evidence="4">2.3.1.-</ecNumber>
    </alternativeName>
    <alternativeName>
        <fullName>Zinc finger DHHC domain-containing protein 15A</fullName>
    </alternativeName>
</protein>
<evidence type="ECO:0000250" key="1">
    <source>
        <dbReference type="UniProtKB" id="F1QXD3"/>
    </source>
</evidence>
<evidence type="ECO:0000250" key="2">
    <source>
        <dbReference type="UniProtKB" id="Q2TGJ4"/>
    </source>
</evidence>
<evidence type="ECO:0000250" key="3">
    <source>
        <dbReference type="UniProtKB" id="Q5W0Z9"/>
    </source>
</evidence>
<evidence type="ECO:0000250" key="4">
    <source>
        <dbReference type="UniProtKB" id="Q8BGJ0"/>
    </source>
</evidence>
<evidence type="ECO:0000250" key="5">
    <source>
        <dbReference type="UniProtKB" id="Q96MV8"/>
    </source>
</evidence>
<evidence type="ECO:0000255" key="6"/>
<evidence type="ECO:0000255" key="7">
    <source>
        <dbReference type="PROSITE-ProRule" id="PRU00067"/>
    </source>
</evidence>
<evidence type="ECO:0000255" key="8">
    <source>
        <dbReference type="RuleBase" id="RU079119"/>
    </source>
</evidence>
<evidence type="ECO:0000305" key="9"/>
<feature type="chain" id="PRO_0000450524" description="Palmitoyltransferase ZDHHC15A">
    <location>
        <begin position="1"/>
        <end position="328"/>
    </location>
</feature>
<feature type="topological domain" description="Cytoplasmic" evidence="1">
    <location>
        <begin position="1"/>
        <end position="14"/>
    </location>
</feature>
<feature type="transmembrane region" description="Helical" evidence="6">
    <location>
        <begin position="15"/>
        <end position="35"/>
    </location>
</feature>
<feature type="topological domain" description="Lumenal" evidence="1">
    <location>
        <begin position="36"/>
        <end position="48"/>
    </location>
</feature>
<feature type="transmembrane region" description="Helical" evidence="6">
    <location>
        <begin position="49"/>
        <end position="69"/>
    </location>
</feature>
<feature type="topological domain" description="Cytoplasmic" evidence="1">
    <location>
        <begin position="70"/>
        <end position="166"/>
    </location>
</feature>
<feature type="transmembrane region" description="Helical" evidence="6">
    <location>
        <begin position="167"/>
        <end position="187"/>
    </location>
</feature>
<feature type="topological domain" description="Lumenal" evidence="1">
    <location>
        <begin position="188"/>
        <end position="206"/>
    </location>
</feature>
<feature type="transmembrane region" description="Helical" evidence="6">
    <location>
        <begin position="207"/>
        <end position="227"/>
    </location>
</feature>
<feature type="topological domain" description="Cytoplasmic" evidence="1">
    <location>
        <begin position="228"/>
        <end position="328"/>
    </location>
</feature>
<feature type="domain" description="DHHC" evidence="7">
    <location>
        <begin position="123"/>
        <end position="173"/>
    </location>
</feature>
<feature type="active site" description="S-palmitoyl cysteine intermediate" evidence="7">
    <location>
        <position position="153"/>
    </location>
</feature>
<feature type="binding site" evidence="1">
    <location>
        <position position="125"/>
    </location>
    <ligand>
        <name>Zn(2+)</name>
        <dbReference type="ChEBI" id="CHEBI:29105"/>
        <label>1</label>
    </ligand>
</feature>
<feature type="binding site" evidence="1">
    <location>
        <position position="128"/>
    </location>
    <ligand>
        <name>Zn(2+)</name>
        <dbReference type="ChEBI" id="CHEBI:29105"/>
        <label>1</label>
    </ligand>
</feature>
<feature type="binding site" evidence="3">
    <location>
        <position position="132"/>
    </location>
    <ligand>
        <name>substrate</name>
    </ligand>
</feature>
<feature type="binding site" evidence="1">
    <location>
        <position position="138"/>
    </location>
    <ligand>
        <name>Zn(2+)</name>
        <dbReference type="ChEBI" id="CHEBI:29105"/>
        <label>1</label>
    </ligand>
</feature>
<feature type="binding site" evidence="1">
    <location>
        <position position="139"/>
    </location>
    <ligand>
        <name>Zn(2+)</name>
        <dbReference type="ChEBI" id="CHEBI:29105"/>
        <label>2</label>
    </ligand>
</feature>
<feature type="binding site" evidence="1">
    <location>
        <position position="142"/>
    </location>
    <ligand>
        <name>Zn(2+)</name>
        <dbReference type="ChEBI" id="CHEBI:29105"/>
        <label>2</label>
    </ligand>
</feature>
<feature type="binding site" evidence="1">
    <location>
        <position position="145"/>
    </location>
    <ligand>
        <name>Zn(2+)</name>
        <dbReference type="ChEBI" id="CHEBI:29105"/>
        <label>1</label>
    </ligand>
</feature>
<feature type="binding site" evidence="1">
    <location>
        <position position="152"/>
    </location>
    <ligand>
        <name>Zn(2+)</name>
        <dbReference type="ChEBI" id="CHEBI:29105"/>
        <label>2</label>
    </ligand>
</feature>
<feature type="binding site" evidence="1">
    <location>
        <position position="159"/>
    </location>
    <ligand>
        <name>Zn(2+)</name>
        <dbReference type="ChEBI" id="CHEBI:29105"/>
        <label>2</label>
    </ligand>
</feature>
<keyword id="KW-0012">Acyltransferase</keyword>
<keyword id="KW-0333">Golgi apparatus</keyword>
<keyword id="KW-0449">Lipoprotein</keyword>
<keyword id="KW-0472">Membrane</keyword>
<keyword id="KW-0479">Metal-binding</keyword>
<keyword id="KW-0564">Palmitate</keyword>
<keyword id="KW-1185">Reference proteome</keyword>
<keyword id="KW-0770">Synapse</keyword>
<keyword id="KW-0808">Transferase</keyword>
<keyword id="KW-0812">Transmembrane</keyword>
<keyword id="KW-1133">Transmembrane helix</keyword>
<keyword id="KW-0862">Zinc</keyword>
<gene>
    <name type="primary">zdhhc15a</name>
</gene>
<comment type="function">
    <text evidence="1 4 5">Palmitoyltransferase that catalyzes the addition of palmitate onto various protein substrates (By similarity). Has no stringent fatty acid selectivity and in addition to palmitate can also transfer onto target proteins myristate from tetradecanoyl-CoA and stearate from octadecanoyl-CoA (By similarity). May thereby regulate target proteins association and localization to membranes (By similarity).</text>
</comment>
<comment type="catalytic activity">
    <reaction evidence="4">
        <text>L-cysteinyl-[protein] + hexadecanoyl-CoA = S-hexadecanoyl-L-cysteinyl-[protein] + CoA</text>
        <dbReference type="Rhea" id="RHEA:36683"/>
        <dbReference type="Rhea" id="RHEA-COMP:10131"/>
        <dbReference type="Rhea" id="RHEA-COMP:11032"/>
        <dbReference type="ChEBI" id="CHEBI:29950"/>
        <dbReference type="ChEBI" id="CHEBI:57287"/>
        <dbReference type="ChEBI" id="CHEBI:57379"/>
        <dbReference type="ChEBI" id="CHEBI:74151"/>
        <dbReference type="EC" id="2.3.1.225"/>
    </reaction>
    <physiologicalReaction direction="left-to-right" evidence="4">
        <dbReference type="Rhea" id="RHEA:36684"/>
    </physiologicalReaction>
</comment>
<comment type="catalytic activity">
    <reaction evidence="4">
        <text>L-cysteinyl-[protein] + tetradecanoyl-CoA = S-tetradecanoyl-L-cysteinyl-[protein] + CoA</text>
        <dbReference type="Rhea" id="RHEA:59736"/>
        <dbReference type="Rhea" id="RHEA-COMP:10131"/>
        <dbReference type="Rhea" id="RHEA-COMP:15433"/>
        <dbReference type="ChEBI" id="CHEBI:29950"/>
        <dbReference type="ChEBI" id="CHEBI:57287"/>
        <dbReference type="ChEBI" id="CHEBI:57385"/>
        <dbReference type="ChEBI" id="CHEBI:143199"/>
    </reaction>
    <physiologicalReaction direction="left-to-right" evidence="4">
        <dbReference type="Rhea" id="RHEA:59737"/>
    </physiologicalReaction>
</comment>
<comment type="catalytic activity">
    <reaction evidence="4">
        <text>L-cysteinyl-[protein] + octadecanoyl-CoA = S-octadecanoyl-L-cysteinyl-[protein] + CoA</text>
        <dbReference type="Rhea" id="RHEA:59740"/>
        <dbReference type="Rhea" id="RHEA-COMP:10131"/>
        <dbReference type="Rhea" id="RHEA-COMP:15434"/>
        <dbReference type="ChEBI" id="CHEBI:29950"/>
        <dbReference type="ChEBI" id="CHEBI:57287"/>
        <dbReference type="ChEBI" id="CHEBI:57394"/>
        <dbReference type="ChEBI" id="CHEBI:143200"/>
    </reaction>
    <physiologicalReaction direction="left-to-right" evidence="4">
        <dbReference type="Rhea" id="RHEA:59741"/>
    </physiologicalReaction>
</comment>
<comment type="subcellular location">
    <subcellularLocation>
        <location evidence="2">Golgi apparatus membrane</location>
        <topology evidence="1">Multi-pass membrane protein</topology>
    </subcellularLocation>
    <subcellularLocation>
        <location evidence="2">Postsynaptic density</location>
    </subcellularLocation>
</comment>
<comment type="domain">
    <text evidence="4">The DHHC domain is required for palmitoyltransferase activity.</text>
</comment>
<comment type="PTM">
    <text evidence="1">Autopalmitoylated (in vitro).</text>
</comment>
<comment type="similarity">
    <text evidence="8">Belongs to the DHHC palmitoyltransferase family.</text>
</comment>
<sequence>MLLPACLRRCARLLFWIPVLVVIVVVMWSYYAYVVHFCWILLSSATQRVVFLCLFHLCFGMFSWSFWKAVSTPPSSPSVEFQFSTSDSLLYELERDDVAKSPILLEISQKLPVHTRTATGAIRFCHHCQLIKPDRCHHCSVCQTCVLKMDHHCLWLNNCMGFSNYKFFMLFLLYSLLYCLLIVSTVTPTVIQLWRGRLFDSCVKLHVLFLTLVSAIFAITLCFLLIFHIWLLTSNKTTLEWLSVPFFANGPGSKAFDVGVQANFLQVFGKKKRLWLFPVFSSEGDGHSFPLSCQMSSHGPPVMNGHERCATLRTVASPKEAAVTIAVD</sequence>
<reference key="1">
    <citation type="journal article" date="2013" name="Nature">
        <title>The zebrafish reference genome sequence and its relationship to the human genome.</title>
        <authorList>
            <person name="Howe K."/>
            <person name="Clark M.D."/>
            <person name="Torroja C.F."/>
            <person name="Torrance J."/>
            <person name="Berthelot C."/>
            <person name="Muffato M."/>
            <person name="Collins J.E."/>
            <person name="Humphray S."/>
            <person name="McLaren K."/>
            <person name="Matthews L."/>
            <person name="McLaren S."/>
            <person name="Sealy I."/>
            <person name="Caccamo M."/>
            <person name="Churcher C."/>
            <person name="Scott C."/>
            <person name="Barrett J.C."/>
            <person name="Koch R."/>
            <person name="Rauch G.J."/>
            <person name="White S."/>
            <person name="Chow W."/>
            <person name="Kilian B."/>
            <person name="Quintais L.T."/>
            <person name="Guerra-Assuncao J.A."/>
            <person name="Zhou Y."/>
            <person name="Gu Y."/>
            <person name="Yen J."/>
            <person name="Vogel J.H."/>
            <person name="Eyre T."/>
            <person name="Redmond S."/>
            <person name="Banerjee R."/>
            <person name="Chi J."/>
            <person name="Fu B."/>
            <person name="Langley E."/>
            <person name="Maguire S.F."/>
            <person name="Laird G.K."/>
            <person name="Lloyd D."/>
            <person name="Kenyon E."/>
            <person name="Donaldson S."/>
            <person name="Sehra H."/>
            <person name="Almeida-King J."/>
            <person name="Loveland J."/>
            <person name="Trevanion S."/>
            <person name="Jones M."/>
            <person name="Quail M."/>
            <person name="Willey D."/>
            <person name="Hunt A."/>
            <person name="Burton J."/>
            <person name="Sims S."/>
            <person name="McLay K."/>
            <person name="Plumb B."/>
            <person name="Davis J."/>
            <person name="Clee C."/>
            <person name="Oliver K."/>
            <person name="Clark R."/>
            <person name="Riddle C."/>
            <person name="Elliot D."/>
            <person name="Threadgold G."/>
            <person name="Harden G."/>
            <person name="Ware D."/>
            <person name="Begum S."/>
            <person name="Mortimore B."/>
            <person name="Kerry G."/>
            <person name="Heath P."/>
            <person name="Phillimore B."/>
            <person name="Tracey A."/>
            <person name="Corby N."/>
            <person name="Dunn M."/>
            <person name="Johnson C."/>
            <person name="Wood J."/>
            <person name="Clark S."/>
            <person name="Pelan S."/>
            <person name="Griffiths G."/>
            <person name="Smith M."/>
            <person name="Glithero R."/>
            <person name="Howden P."/>
            <person name="Barker N."/>
            <person name="Lloyd C."/>
            <person name="Stevens C."/>
            <person name="Harley J."/>
            <person name="Holt K."/>
            <person name="Panagiotidis G."/>
            <person name="Lovell J."/>
            <person name="Beasley H."/>
            <person name="Henderson C."/>
            <person name="Gordon D."/>
            <person name="Auger K."/>
            <person name="Wright D."/>
            <person name="Collins J."/>
            <person name="Raisen C."/>
            <person name="Dyer L."/>
            <person name="Leung K."/>
            <person name="Robertson L."/>
            <person name="Ambridge K."/>
            <person name="Leongamornlert D."/>
            <person name="McGuire S."/>
            <person name="Gilderthorp R."/>
            <person name="Griffiths C."/>
            <person name="Manthravadi D."/>
            <person name="Nichol S."/>
            <person name="Barker G."/>
            <person name="Whitehead S."/>
            <person name="Kay M."/>
            <person name="Brown J."/>
            <person name="Murnane C."/>
            <person name="Gray E."/>
            <person name="Humphries M."/>
            <person name="Sycamore N."/>
            <person name="Barker D."/>
            <person name="Saunders D."/>
            <person name="Wallis J."/>
            <person name="Babbage A."/>
            <person name="Hammond S."/>
            <person name="Mashreghi-Mohammadi M."/>
            <person name="Barr L."/>
            <person name="Martin S."/>
            <person name="Wray P."/>
            <person name="Ellington A."/>
            <person name="Matthews N."/>
            <person name="Ellwood M."/>
            <person name="Woodmansey R."/>
            <person name="Clark G."/>
            <person name="Cooper J."/>
            <person name="Tromans A."/>
            <person name="Grafham D."/>
            <person name="Skuce C."/>
            <person name="Pandian R."/>
            <person name="Andrews R."/>
            <person name="Harrison E."/>
            <person name="Kimberley A."/>
            <person name="Garnett J."/>
            <person name="Fosker N."/>
            <person name="Hall R."/>
            <person name="Garner P."/>
            <person name="Kelly D."/>
            <person name="Bird C."/>
            <person name="Palmer S."/>
            <person name="Gehring I."/>
            <person name="Berger A."/>
            <person name="Dooley C.M."/>
            <person name="Ersan-Urun Z."/>
            <person name="Eser C."/>
            <person name="Geiger H."/>
            <person name="Geisler M."/>
            <person name="Karotki L."/>
            <person name="Kirn A."/>
            <person name="Konantz J."/>
            <person name="Konantz M."/>
            <person name="Oberlander M."/>
            <person name="Rudolph-Geiger S."/>
            <person name="Teucke M."/>
            <person name="Lanz C."/>
            <person name="Raddatz G."/>
            <person name="Osoegawa K."/>
            <person name="Zhu B."/>
            <person name="Rapp A."/>
            <person name="Widaa S."/>
            <person name="Langford C."/>
            <person name="Yang F."/>
            <person name="Schuster S.C."/>
            <person name="Carter N.P."/>
            <person name="Harrow J."/>
            <person name="Ning Z."/>
            <person name="Herrero J."/>
            <person name="Searle S.M."/>
            <person name="Enright A."/>
            <person name="Geisler R."/>
            <person name="Plasterk R.H."/>
            <person name="Lee C."/>
            <person name="Westerfield M."/>
            <person name="de Jong P.J."/>
            <person name="Zon L.I."/>
            <person name="Postlethwait J.H."/>
            <person name="Nusslein-Volhard C."/>
            <person name="Hubbard T.J."/>
            <person name="Roest Crollius H."/>
            <person name="Rogers J."/>
            <person name="Stemple D.L."/>
        </authorList>
    </citation>
    <scope>NUCLEOTIDE SEQUENCE [LARGE SCALE GENOMIC DNA]</scope>
    <source>
        <strain>Tuebingen</strain>
    </source>
</reference>
<name>ZH15A_DANRE</name>
<accession>A0A0R4IDP3</accession>